<gene>
    <name type="primary">Vamp1</name>
    <name type="synonym">Syb1</name>
</gene>
<name>VAMP1_MOUSE</name>
<keyword id="KW-0025">Alternative splicing</keyword>
<keyword id="KW-0175">Coiled coil</keyword>
<keyword id="KW-0968">Cytoplasmic vesicle</keyword>
<keyword id="KW-0903">Direct protein sequencing</keyword>
<keyword id="KW-0225">Disease variant</keyword>
<keyword id="KW-0472">Membrane</keyword>
<keyword id="KW-0597">Phosphoprotein</keyword>
<keyword id="KW-1185">Reference proteome</keyword>
<keyword id="KW-0770">Synapse</keyword>
<keyword id="KW-0771">Synaptosome</keyword>
<keyword id="KW-0812">Transmembrane</keyword>
<keyword id="KW-1133">Transmembrane helix</keyword>
<sequence>MSAPAQPPAEGTEGAAPGGGPPGPPPNMTSNRRLQQTQAQVEEVVDIMRVNVDKVLERDQKLSELDDRADALQAGASQFESSAAKLKRKYWWKNCKMMIMLGAICAIIVVVIVIYFFT</sequence>
<comment type="function">
    <text>Involved in the targeting and/or fusion of transport vesicles to their target membrane.</text>
</comment>
<comment type="subunit">
    <text evidence="1">Interacts with VAPA and VAPB.</text>
</comment>
<comment type="subcellular location">
    <molecule>Isoform 1</molecule>
    <subcellularLocation>
        <location evidence="1">Cytoplasmic vesicle</location>
        <location evidence="1">Secretory vesicle</location>
        <location evidence="1">Synaptic vesicle membrane</location>
        <topology evidence="1">Single-pass type IV membrane protein</topology>
    </subcellularLocation>
    <subcellularLocation>
        <location evidence="1">Synapse</location>
        <location evidence="1">Synaptosome</location>
    </subcellularLocation>
</comment>
<comment type="subcellular location">
    <molecule>Isoform 2</molecule>
    <subcellularLocation>
        <location evidence="1">Cytoplasmic vesicle membrane</location>
        <topology evidence="1">Single-pass type IV membrane protein</topology>
    </subcellularLocation>
    <subcellularLocation>
        <location evidence="1">Synapse</location>
        <location evidence="1">Synaptosome</location>
    </subcellularLocation>
</comment>
<comment type="alternative products">
    <event type="alternative splicing"/>
    <isoform>
        <id>Q62442-1</id>
        <name>1</name>
        <sequence type="displayed"/>
    </isoform>
    <isoform>
        <id>Q62442-2</id>
        <name>2</name>
        <sequence type="described" ref="VSP_029186"/>
    </isoform>
</comment>
<comment type="tissue specificity">
    <text evidence="5">Highly expressed in the zona incerta and rostral periolivary region of the brain. Other neuroanatomical regions show negligible expression. Expressed in the retina, expression observed in the outer segments of the photoreceptors, in the outer and inner plexiform layers, and in a subset of ganglion cells.</text>
</comment>
<comment type="PTM">
    <text evidence="6">(Microbial infection) Targeted and hydrolyzed by C.botulinum neurotoxin type X (BoNT/X) which hydrolyzes the 68-Arg-|-Ala-69 bond and probably inhibits neurotransmitter release (PubMed:28770820). It remains unknown whether BoNT/X is ever produced, or what organisms it targets.</text>
</comment>
<comment type="disease">
    <text evidence="5">Defects in Vamp1 are the cause of lethal-wasting (lew) phenotype, a mice mutant strain. The lew mutant phenotype is inherited in an autosomal recessive manner and manifests with neurological signs. Lew animals are characterized by a general lack of movement and wasting, eventually leading to death before weaning. The affected animals die near postnatal day 15 (P15). By P10, the mutants are noticeably immobile and lay on their side. Before this stage, mutants can be identified by a failure to attempt to right themselves. In earlier perinatal stages, the mutants are of normal size and difficult to discern from their normal littermates. The affected mice can move their limbs although not in any purposeful manner. No protein is detectable in homozygous mutant animals.</text>
</comment>
<comment type="similarity">
    <text evidence="8">Belongs to the synaptobrevin family.</text>
</comment>
<feature type="chain" id="PRO_0000206720" description="Vesicle-associated membrane protein 1">
    <location>
        <begin position="1"/>
        <end position="118"/>
    </location>
</feature>
<feature type="topological domain" description="Cytoplasmic" evidence="2">
    <location>
        <begin position="1"/>
        <end position="96"/>
    </location>
</feature>
<feature type="transmembrane region" description="Helical; Anchor for type IV membrane protein" evidence="2">
    <location>
        <begin position="97"/>
        <end position="116"/>
    </location>
</feature>
<feature type="topological domain" description="Vesicular" evidence="2">
    <location>
        <begin position="117"/>
        <end position="118"/>
    </location>
</feature>
<feature type="domain" description="v-SNARE coiled-coil homology" evidence="3">
    <location>
        <begin position="33"/>
        <end position="93"/>
    </location>
</feature>
<feature type="region of interest" description="Disordered" evidence="4">
    <location>
        <begin position="1"/>
        <end position="36"/>
    </location>
</feature>
<feature type="compositionally biased region" description="Low complexity" evidence="4">
    <location>
        <begin position="1"/>
        <end position="15"/>
    </location>
</feature>
<feature type="site" description="(Microbial infection) Cleavage; by C.botulinum neurotoxin type X (BoNT/X)" evidence="6">
    <location>
        <begin position="68"/>
        <end position="69"/>
    </location>
</feature>
<feature type="modified residue" description="Phosphoserine" evidence="9">
    <location>
        <position position="63"/>
    </location>
</feature>
<feature type="splice variant" id="VSP_029186" description="In isoform 2." evidence="7">
    <original>IYFFT</original>
    <variation>SKYR</variation>
    <location>
        <begin position="114"/>
        <end position="118"/>
    </location>
</feature>
<feature type="sequence variant" description="In lew." evidence="5">
    <location>
        <begin position="64"/>
        <end position="118"/>
    </location>
</feature>
<protein>
    <recommendedName>
        <fullName>Vesicle-associated membrane protein 1</fullName>
        <shortName>VAMP-1</shortName>
    </recommendedName>
    <alternativeName>
        <fullName>Synaptobrevin-1</fullName>
    </alternativeName>
</protein>
<reference key="1">
    <citation type="submission" date="1996-07" db="EMBL/GenBank/DDBJ databases">
        <authorList>
            <person name="Martin S."/>
            <person name="Tellam J.T."/>
            <person name="Livington C."/>
            <person name="Slot J.W."/>
            <person name="Gould G.W."/>
            <person name="James D.E."/>
        </authorList>
    </citation>
    <scope>NUCLEOTIDE SEQUENCE [MRNA] (ISOFORM 1)</scope>
</reference>
<reference key="2">
    <citation type="submission" date="1997-07" db="EMBL/GenBank/DDBJ databases">
        <authorList>
            <person name="Olken S.K."/>
            <person name="Doerre S."/>
            <person name="Corley R.B."/>
        </authorList>
    </citation>
    <scope>NUCLEOTIDE SEQUENCE [MRNA] (ISOFORM 1)</scope>
    <source>
        <strain>BALB/cJ</strain>
        <tissue>Brain</tissue>
    </source>
</reference>
<reference key="3">
    <citation type="journal article" date="2005" name="Science">
        <title>The transcriptional landscape of the mammalian genome.</title>
        <authorList>
            <person name="Carninci P."/>
            <person name="Kasukawa T."/>
            <person name="Katayama S."/>
            <person name="Gough J."/>
            <person name="Frith M.C."/>
            <person name="Maeda N."/>
            <person name="Oyama R."/>
            <person name="Ravasi T."/>
            <person name="Lenhard B."/>
            <person name="Wells C."/>
            <person name="Kodzius R."/>
            <person name="Shimokawa K."/>
            <person name="Bajic V.B."/>
            <person name="Brenner S.E."/>
            <person name="Batalov S."/>
            <person name="Forrest A.R."/>
            <person name="Zavolan M."/>
            <person name="Davis M.J."/>
            <person name="Wilming L.G."/>
            <person name="Aidinis V."/>
            <person name="Allen J.E."/>
            <person name="Ambesi-Impiombato A."/>
            <person name="Apweiler R."/>
            <person name="Aturaliya R.N."/>
            <person name="Bailey T.L."/>
            <person name="Bansal M."/>
            <person name="Baxter L."/>
            <person name="Beisel K.W."/>
            <person name="Bersano T."/>
            <person name="Bono H."/>
            <person name="Chalk A.M."/>
            <person name="Chiu K.P."/>
            <person name="Choudhary V."/>
            <person name="Christoffels A."/>
            <person name="Clutterbuck D.R."/>
            <person name="Crowe M.L."/>
            <person name="Dalla E."/>
            <person name="Dalrymple B.P."/>
            <person name="de Bono B."/>
            <person name="Della Gatta G."/>
            <person name="di Bernardo D."/>
            <person name="Down T."/>
            <person name="Engstrom P."/>
            <person name="Fagiolini M."/>
            <person name="Faulkner G."/>
            <person name="Fletcher C.F."/>
            <person name="Fukushima T."/>
            <person name="Furuno M."/>
            <person name="Futaki S."/>
            <person name="Gariboldi M."/>
            <person name="Georgii-Hemming P."/>
            <person name="Gingeras T.R."/>
            <person name="Gojobori T."/>
            <person name="Green R.E."/>
            <person name="Gustincich S."/>
            <person name="Harbers M."/>
            <person name="Hayashi Y."/>
            <person name="Hensch T.K."/>
            <person name="Hirokawa N."/>
            <person name="Hill D."/>
            <person name="Huminiecki L."/>
            <person name="Iacono M."/>
            <person name="Ikeo K."/>
            <person name="Iwama A."/>
            <person name="Ishikawa T."/>
            <person name="Jakt M."/>
            <person name="Kanapin A."/>
            <person name="Katoh M."/>
            <person name="Kawasawa Y."/>
            <person name="Kelso J."/>
            <person name="Kitamura H."/>
            <person name="Kitano H."/>
            <person name="Kollias G."/>
            <person name="Krishnan S.P."/>
            <person name="Kruger A."/>
            <person name="Kummerfeld S.K."/>
            <person name="Kurochkin I.V."/>
            <person name="Lareau L.F."/>
            <person name="Lazarevic D."/>
            <person name="Lipovich L."/>
            <person name="Liu J."/>
            <person name="Liuni S."/>
            <person name="McWilliam S."/>
            <person name="Madan Babu M."/>
            <person name="Madera M."/>
            <person name="Marchionni L."/>
            <person name="Matsuda H."/>
            <person name="Matsuzawa S."/>
            <person name="Miki H."/>
            <person name="Mignone F."/>
            <person name="Miyake S."/>
            <person name="Morris K."/>
            <person name="Mottagui-Tabar S."/>
            <person name="Mulder N."/>
            <person name="Nakano N."/>
            <person name="Nakauchi H."/>
            <person name="Ng P."/>
            <person name="Nilsson R."/>
            <person name="Nishiguchi S."/>
            <person name="Nishikawa S."/>
            <person name="Nori F."/>
            <person name="Ohara O."/>
            <person name="Okazaki Y."/>
            <person name="Orlando V."/>
            <person name="Pang K.C."/>
            <person name="Pavan W.J."/>
            <person name="Pavesi G."/>
            <person name="Pesole G."/>
            <person name="Petrovsky N."/>
            <person name="Piazza S."/>
            <person name="Reed J."/>
            <person name="Reid J.F."/>
            <person name="Ring B.Z."/>
            <person name="Ringwald M."/>
            <person name="Rost B."/>
            <person name="Ruan Y."/>
            <person name="Salzberg S.L."/>
            <person name="Sandelin A."/>
            <person name="Schneider C."/>
            <person name="Schoenbach C."/>
            <person name="Sekiguchi K."/>
            <person name="Semple C.A."/>
            <person name="Seno S."/>
            <person name="Sessa L."/>
            <person name="Sheng Y."/>
            <person name="Shibata Y."/>
            <person name="Shimada H."/>
            <person name="Shimada K."/>
            <person name="Silva D."/>
            <person name="Sinclair B."/>
            <person name="Sperling S."/>
            <person name="Stupka E."/>
            <person name="Sugiura K."/>
            <person name="Sultana R."/>
            <person name="Takenaka Y."/>
            <person name="Taki K."/>
            <person name="Tammoja K."/>
            <person name="Tan S.L."/>
            <person name="Tang S."/>
            <person name="Taylor M.S."/>
            <person name="Tegner J."/>
            <person name="Teichmann S.A."/>
            <person name="Ueda H.R."/>
            <person name="van Nimwegen E."/>
            <person name="Verardo R."/>
            <person name="Wei C.L."/>
            <person name="Yagi K."/>
            <person name="Yamanishi H."/>
            <person name="Zabarovsky E."/>
            <person name="Zhu S."/>
            <person name="Zimmer A."/>
            <person name="Hide W."/>
            <person name="Bult C."/>
            <person name="Grimmond S.M."/>
            <person name="Teasdale R.D."/>
            <person name="Liu E.T."/>
            <person name="Brusic V."/>
            <person name="Quackenbush J."/>
            <person name="Wahlestedt C."/>
            <person name="Mattick J.S."/>
            <person name="Hume D.A."/>
            <person name="Kai C."/>
            <person name="Sasaki D."/>
            <person name="Tomaru Y."/>
            <person name="Fukuda S."/>
            <person name="Kanamori-Katayama M."/>
            <person name="Suzuki M."/>
            <person name="Aoki J."/>
            <person name="Arakawa T."/>
            <person name="Iida J."/>
            <person name="Imamura K."/>
            <person name="Itoh M."/>
            <person name="Kato T."/>
            <person name="Kawaji H."/>
            <person name="Kawagashira N."/>
            <person name="Kawashima T."/>
            <person name="Kojima M."/>
            <person name="Kondo S."/>
            <person name="Konno H."/>
            <person name="Nakano K."/>
            <person name="Ninomiya N."/>
            <person name="Nishio T."/>
            <person name="Okada M."/>
            <person name="Plessy C."/>
            <person name="Shibata K."/>
            <person name="Shiraki T."/>
            <person name="Suzuki S."/>
            <person name="Tagami M."/>
            <person name="Waki K."/>
            <person name="Watahiki A."/>
            <person name="Okamura-Oho Y."/>
            <person name="Suzuki H."/>
            <person name="Kawai J."/>
            <person name="Hayashizaki Y."/>
        </authorList>
    </citation>
    <scope>NUCLEOTIDE SEQUENCE [LARGE SCALE MRNA] (ISOFORM 1)</scope>
    <source>
        <strain>C57BL/6J</strain>
        <tissue>Cerebellum</tissue>
        <tissue>Medulla oblongata</tissue>
    </source>
</reference>
<reference key="4">
    <citation type="journal article" date="2004" name="Genome Res.">
        <title>The status, quality, and expansion of the NIH full-length cDNA project: the Mammalian Gene Collection (MGC).</title>
        <authorList>
            <consortium name="The MGC Project Team"/>
        </authorList>
    </citation>
    <scope>NUCLEOTIDE SEQUENCE [LARGE SCALE MRNA] (ISOFORMS 1 AND 2)</scope>
    <source>
        <strain>C57BL/6J</strain>
        <tissue>Retina</tissue>
    </source>
</reference>
<reference key="5">
    <citation type="submission" date="2009-01" db="UniProtKB">
        <authorList>
            <person name="Lubec G."/>
            <person name="Kang S.U."/>
            <person name="Sunyer B."/>
            <person name="Chen W.-Q."/>
        </authorList>
    </citation>
    <scope>PROTEIN SEQUENCE OF 34-49; 50-58 AND 62-85</scope>
    <scope>IDENTIFICATION BY MASS SPECTROMETRY</scope>
    <source>
        <strain>C57BL/6J</strain>
        <strain>OF1</strain>
        <tissue>Brain</tissue>
        <tissue>Hippocampus</tissue>
    </source>
</reference>
<reference key="6">
    <citation type="journal article" date="2007" name="Neurogenetics">
        <title>A null mutation in VAMP1/synaptobrevin is associated with neurological defects and prewean mortality in the lethal-wasting mouse mutant.</title>
        <authorList>
            <person name="Nystuen A.M."/>
            <person name="Schwendinger J.K."/>
            <person name="Sachs A.J."/>
            <person name="Yang A.W."/>
            <person name="Haider N.B."/>
        </authorList>
    </citation>
    <scope>TISSUE SPECIFICITY</scope>
    <scope>INVOLVEMENT IN LEW</scope>
    <scope>VARIANT LEW 64-GLU--THR-118 DEL</scope>
</reference>
<reference key="7">
    <citation type="journal article" date="2010" name="Cell">
        <title>A tissue-specific atlas of mouse protein phosphorylation and expression.</title>
        <authorList>
            <person name="Huttlin E.L."/>
            <person name="Jedrychowski M.P."/>
            <person name="Elias J.E."/>
            <person name="Goswami T."/>
            <person name="Rad R."/>
            <person name="Beausoleil S.A."/>
            <person name="Villen J."/>
            <person name="Haas W."/>
            <person name="Sowa M.E."/>
            <person name="Gygi S.P."/>
        </authorList>
    </citation>
    <scope>PHOSPHORYLATION [LARGE SCALE ANALYSIS] AT SER-63</scope>
    <scope>IDENTIFICATION BY MASS SPECTROMETRY [LARGE SCALE ANALYSIS]</scope>
    <source>
        <tissue>Brain</tissue>
    </source>
</reference>
<reference key="8">
    <citation type="journal article" date="2017" name="Nat. Commun.">
        <title>Identification and characterization of a novel botulinum neurotoxin.</title>
        <authorList>
            <person name="Zhang S."/>
            <person name="Masuyer G."/>
            <person name="Zhang J."/>
            <person name="Shen Y."/>
            <person name="Lundin D."/>
            <person name="Henriksson L."/>
            <person name="Miyashita S.I."/>
            <person name="Martinez-Carranza M."/>
            <person name="Dong M."/>
            <person name="Stenmark P."/>
        </authorList>
    </citation>
    <scope>PROTEOLYTIC CLEAVAGE (MICROBIAL INFECTION) BY C.BOTULINUM NEUROTOXIN TYPE X</scope>
</reference>
<accession>Q62442</accession>
<accession>Q6PFF3</accession>
<accession>Q810K6</accession>
<organism>
    <name type="scientific">Mus musculus</name>
    <name type="common">Mouse</name>
    <dbReference type="NCBI Taxonomy" id="10090"/>
    <lineage>
        <taxon>Eukaryota</taxon>
        <taxon>Metazoa</taxon>
        <taxon>Chordata</taxon>
        <taxon>Craniata</taxon>
        <taxon>Vertebrata</taxon>
        <taxon>Euteleostomi</taxon>
        <taxon>Mammalia</taxon>
        <taxon>Eutheria</taxon>
        <taxon>Euarchontoglires</taxon>
        <taxon>Glires</taxon>
        <taxon>Rodentia</taxon>
        <taxon>Myomorpha</taxon>
        <taxon>Muroidea</taxon>
        <taxon>Muridae</taxon>
        <taxon>Murinae</taxon>
        <taxon>Mus</taxon>
        <taxon>Mus</taxon>
    </lineage>
</organism>
<dbReference type="EMBL" id="U61751">
    <property type="protein sequence ID" value="AAB03491.1"/>
    <property type="molecule type" value="mRNA"/>
</dbReference>
<dbReference type="EMBL" id="AF007167">
    <property type="protein sequence ID" value="AAB62930.1"/>
    <property type="molecule type" value="mRNA"/>
</dbReference>
<dbReference type="EMBL" id="AK018783">
    <property type="protein sequence ID" value="BAB31407.1"/>
    <property type="molecule type" value="mRNA"/>
</dbReference>
<dbReference type="EMBL" id="AK078156">
    <property type="protein sequence ID" value="BAC37151.1"/>
    <property type="molecule type" value="mRNA"/>
</dbReference>
<dbReference type="EMBL" id="BC049902">
    <property type="protein sequence ID" value="AAH49902.2"/>
    <property type="molecule type" value="mRNA"/>
</dbReference>
<dbReference type="EMBL" id="BC057587">
    <property type="protein sequence ID" value="AAH57587.1"/>
    <property type="molecule type" value="mRNA"/>
</dbReference>
<dbReference type="CCDS" id="CCDS20546.1">
    <molecule id="Q62442-1"/>
</dbReference>
<dbReference type="CCDS" id="CCDS39637.1">
    <molecule id="Q62442-2"/>
</dbReference>
<dbReference type="RefSeq" id="NP_001074026.1">
    <molecule id="Q62442-2"/>
    <property type="nucleotide sequence ID" value="NM_001080557.1"/>
</dbReference>
<dbReference type="RefSeq" id="NP_033522.1">
    <molecule id="Q62442-1"/>
    <property type="nucleotide sequence ID" value="NM_009496.3"/>
</dbReference>
<dbReference type="SMR" id="Q62442"/>
<dbReference type="BioGRID" id="204494">
    <property type="interactions" value="12"/>
</dbReference>
<dbReference type="FunCoup" id="Q62442">
    <property type="interactions" value="700"/>
</dbReference>
<dbReference type="STRING" id="10090.ENSMUSP00000032487"/>
<dbReference type="GlyGen" id="Q62442">
    <property type="glycosylation" value="1 site, 1 N-linked glycan (1 site)"/>
</dbReference>
<dbReference type="iPTMnet" id="Q62442"/>
<dbReference type="PhosphoSitePlus" id="Q62442"/>
<dbReference type="SwissPalm" id="Q62442"/>
<dbReference type="PaxDb" id="10090-ENSMUSP00000032487"/>
<dbReference type="ProteomicsDB" id="300209">
    <molecule id="Q62442-1"/>
</dbReference>
<dbReference type="ProteomicsDB" id="300210">
    <molecule id="Q62442-2"/>
</dbReference>
<dbReference type="Pumba" id="Q62442"/>
<dbReference type="Antibodypedia" id="3460">
    <property type="antibodies" value="368 antibodies from 44 providers"/>
</dbReference>
<dbReference type="DNASU" id="22317"/>
<dbReference type="Ensembl" id="ENSMUST00000032487.14">
    <molecule id="Q62442-1"/>
    <property type="protein sequence ID" value="ENSMUSP00000032487.8"/>
    <property type="gene ID" value="ENSMUSG00000030337.17"/>
</dbReference>
<dbReference type="Ensembl" id="ENSMUST00000100942.9">
    <molecule id="Q62442-2"/>
    <property type="protein sequence ID" value="ENSMUSP00000098503.3"/>
    <property type="gene ID" value="ENSMUSG00000030337.17"/>
</dbReference>
<dbReference type="GeneID" id="22317"/>
<dbReference type="KEGG" id="mmu:22317"/>
<dbReference type="UCSC" id="uc009dtx.1">
    <molecule id="Q62442-1"/>
    <property type="organism name" value="mouse"/>
</dbReference>
<dbReference type="UCSC" id="uc009dty.1">
    <molecule id="Q62442-2"/>
    <property type="organism name" value="mouse"/>
</dbReference>
<dbReference type="AGR" id="MGI:1313276"/>
<dbReference type="CTD" id="6843"/>
<dbReference type="MGI" id="MGI:1313276">
    <property type="gene designation" value="Vamp1"/>
</dbReference>
<dbReference type="VEuPathDB" id="HostDB:ENSMUSG00000030337"/>
<dbReference type="eggNOG" id="KOG0860">
    <property type="taxonomic scope" value="Eukaryota"/>
</dbReference>
<dbReference type="GeneTree" id="ENSGT00940000161390"/>
<dbReference type="HOGENOM" id="CLU_064620_4_0_1"/>
<dbReference type="InParanoid" id="Q62442"/>
<dbReference type="OMA" id="CKYNTMK"/>
<dbReference type="OrthoDB" id="84017at9989"/>
<dbReference type="PhylomeDB" id="Q62442"/>
<dbReference type="TreeFam" id="TF313666"/>
<dbReference type="BioGRID-ORCS" id="22317">
    <property type="hits" value="3 hits in 76 CRISPR screens"/>
</dbReference>
<dbReference type="CD-CODE" id="CE726F99">
    <property type="entry name" value="Postsynaptic density"/>
</dbReference>
<dbReference type="ChiTaRS" id="Vamp1">
    <property type="organism name" value="mouse"/>
</dbReference>
<dbReference type="PRO" id="PR:Q62442"/>
<dbReference type="Proteomes" id="UP000000589">
    <property type="component" value="Chromosome 6"/>
</dbReference>
<dbReference type="RNAct" id="Q62442">
    <property type="molecule type" value="protein"/>
</dbReference>
<dbReference type="Bgee" id="ENSMUSG00000030337">
    <property type="expression patterns" value="Expressed in pontine nuclear group and 194 other cell types or tissues"/>
</dbReference>
<dbReference type="ExpressionAtlas" id="Q62442">
    <property type="expression patterns" value="baseline and differential"/>
</dbReference>
<dbReference type="GO" id="GO:0009986">
    <property type="term" value="C:cell surface"/>
    <property type="evidence" value="ECO:0000314"/>
    <property type="project" value="BHF-UCL"/>
</dbReference>
<dbReference type="GO" id="GO:0098978">
    <property type="term" value="C:glutamatergic synapse"/>
    <property type="evidence" value="ECO:0000314"/>
    <property type="project" value="SynGO"/>
</dbReference>
<dbReference type="GO" id="GO:0005739">
    <property type="term" value="C:mitochondrion"/>
    <property type="evidence" value="ECO:0007005"/>
    <property type="project" value="MGI"/>
</dbReference>
<dbReference type="GO" id="GO:0031594">
    <property type="term" value="C:neuromuscular junction"/>
    <property type="evidence" value="ECO:0000314"/>
    <property type="project" value="SynGO"/>
</dbReference>
<dbReference type="GO" id="GO:0043005">
    <property type="term" value="C:neuron projection"/>
    <property type="evidence" value="ECO:0007669"/>
    <property type="project" value="UniProtKB-KW"/>
</dbReference>
<dbReference type="GO" id="GO:0030672">
    <property type="term" value="C:synaptic vesicle membrane"/>
    <property type="evidence" value="ECO:0007669"/>
    <property type="project" value="UniProtKB-SubCell"/>
</dbReference>
<dbReference type="GO" id="GO:0031630">
    <property type="term" value="P:regulation of synaptic vesicle fusion to presynaptic active zone membrane"/>
    <property type="evidence" value="ECO:0000314"/>
    <property type="project" value="SynGO"/>
</dbReference>
<dbReference type="GO" id="GO:0035493">
    <property type="term" value="P:SNARE complex assembly"/>
    <property type="evidence" value="ECO:0000314"/>
    <property type="project" value="BHF-UCL"/>
</dbReference>
<dbReference type="GO" id="GO:0016082">
    <property type="term" value="P:synaptic vesicle priming"/>
    <property type="evidence" value="ECO:0000314"/>
    <property type="project" value="SynGO"/>
</dbReference>
<dbReference type="CDD" id="cd15870">
    <property type="entry name" value="R-SNARE_VAMP2"/>
    <property type="match status" value="1"/>
</dbReference>
<dbReference type="FunFam" id="1.20.5.110:FF:000013">
    <property type="entry name" value="Vesicle-associated membrane protein 2"/>
    <property type="match status" value="1"/>
</dbReference>
<dbReference type="Gene3D" id="1.20.5.110">
    <property type="match status" value="1"/>
</dbReference>
<dbReference type="InterPro" id="IPR001388">
    <property type="entry name" value="Synaptobrevin-like"/>
</dbReference>
<dbReference type="InterPro" id="IPR016444">
    <property type="entry name" value="Synaptobrevin/VAMP"/>
</dbReference>
<dbReference type="InterPro" id="IPR042855">
    <property type="entry name" value="V_SNARE_CC"/>
</dbReference>
<dbReference type="PANTHER" id="PTHR45701">
    <property type="entry name" value="SYNAPTOBREVIN FAMILY MEMBER"/>
    <property type="match status" value="1"/>
</dbReference>
<dbReference type="Pfam" id="PF00957">
    <property type="entry name" value="Synaptobrevin"/>
    <property type="match status" value="1"/>
</dbReference>
<dbReference type="PIRSF" id="PIRSF005409">
    <property type="entry name" value="Synaptobrevin_euk"/>
    <property type="match status" value="1"/>
</dbReference>
<dbReference type="PRINTS" id="PR00219">
    <property type="entry name" value="SYNAPTOBREVN"/>
</dbReference>
<dbReference type="SUPFAM" id="SSF58038">
    <property type="entry name" value="SNARE fusion complex"/>
    <property type="match status" value="1"/>
</dbReference>
<dbReference type="PROSITE" id="PS00417">
    <property type="entry name" value="SYNAPTOBREVIN"/>
    <property type="match status" value="1"/>
</dbReference>
<dbReference type="PROSITE" id="PS50892">
    <property type="entry name" value="V_SNARE"/>
    <property type="match status" value="1"/>
</dbReference>
<proteinExistence type="evidence at protein level"/>
<evidence type="ECO:0000250" key="1"/>
<evidence type="ECO:0000255" key="2"/>
<evidence type="ECO:0000255" key="3">
    <source>
        <dbReference type="PROSITE-ProRule" id="PRU00290"/>
    </source>
</evidence>
<evidence type="ECO:0000256" key="4">
    <source>
        <dbReference type="SAM" id="MobiDB-lite"/>
    </source>
</evidence>
<evidence type="ECO:0000269" key="5">
    <source>
    </source>
</evidence>
<evidence type="ECO:0000269" key="6">
    <source>
    </source>
</evidence>
<evidence type="ECO:0000303" key="7">
    <source>
    </source>
</evidence>
<evidence type="ECO:0000305" key="8"/>
<evidence type="ECO:0007744" key="9">
    <source>
    </source>
</evidence>